<name>PUR5_RHIR8</name>
<comment type="catalytic activity">
    <reaction evidence="1">
        <text>2-formamido-N(1)-(5-O-phospho-beta-D-ribosyl)acetamidine + ATP = 5-amino-1-(5-phospho-beta-D-ribosyl)imidazole + ADP + phosphate + H(+)</text>
        <dbReference type="Rhea" id="RHEA:23032"/>
        <dbReference type="ChEBI" id="CHEBI:15378"/>
        <dbReference type="ChEBI" id="CHEBI:30616"/>
        <dbReference type="ChEBI" id="CHEBI:43474"/>
        <dbReference type="ChEBI" id="CHEBI:137981"/>
        <dbReference type="ChEBI" id="CHEBI:147287"/>
        <dbReference type="ChEBI" id="CHEBI:456216"/>
        <dbReference type="EC" id="6.3.3.1"/>
    </reaction>
</comment>
<comment type="pathway">
    <text evidence="1">Purine metabolism; IMP biosynthesis via de novo pathway; 5-amino-1-(5-phospho-D-ribosyl)imidazole from N(2)-formyl-N(1)-(5-phospho-D-ribosyl)glycinamide: step 2/2.</text>
</comment>
<comment type="subcellular location">
    <subcellularLocation>
        <location evidence="1">Cytoplasm</location>
    </subcellularLocation>
</comment>
<comment type="similarity">
    <text evidence="1">Belongs to the AIR synthase family.</text>
</comment>
<evidence type="ECO:0000255" key="1">
    <source>
        <dbReference type="HAMAP-Rule" id="MF_00741"/>
    </source>
</evidence>
<proteinExistence type="inferred from homology"/>
<keyword id="KW-0067">ATP-binding</keyword>
<keyword id="KW-0963">Cytoplasm</keyword>
<keyword id="KW-0436">Ligase</keyword>
<keyword id="KW-0547">Nucleotide-binding</keyword>
<keyword id="KW-0658">Purine biosynthesis</keyword>
<gene>
    <name evidence="1" type="primary">purM</name>
    <name type="ordered locus">Arad_1725</name>
</gene>
<accession>B9JCV0</accession>
<dbReference type="EC" id="6.3.3.1" evidence="1"/>
<dbReference type="EMBL" id="CP000628">
    <property type="protein sequence ID" value="ACM26087.1"/>
    <property type="molecule type" value="Genomic_DNA"/>
</dbReference>
<dbReference type="RefSeq" id="WP_007702626.1">
    <property type="nucleotide sequence ID" value="NC_011985.1"/>
</dbReference>
<dbReference type="SMR" id="B9JCV0"/>
<dbReference type="STRING" id="311403.Arad_1725"/>
<dbReference type="GeneID" id="86847966"/>
<dbReference type="KEGG" id="ara:Arad_1725"/>
<dbReference type="eggNOG" id="COG0150">
    <property type="taxonomic scope" value="Bacteria"/>
</dbReference>
<dbReference type="HOGENOM" id="CLU_047116_0_0_5"/>
<dbReference type="UniPathway" id="UPA00074">
    <property type="reaction ID" value="UER00129"/>
</dbReference>
<dbReference type="Proteomes" id="UP000001600">
    <property type="component" value="Chromosome 1"/>
</dbReference>
<dbReference type="GO" id="GO:0005829">
    <property type="term" value="C:cytosol"/>
    <property type="evidence" value="ECO:0007669"/>
    <property type="project" value="TreeGrafter"/>
</dbReference>
<dbReference type="GO" id="GO:0005524">
    <property type="term" value="F:ATP binding"/>
    <property type="evidence" value="ECO:0007669"/>
    <property type="project" value="UniProtKB-KW"/>
</dbReference>
<dbReference type="GO" id="GO:0004637">
    <property type="term" value="F:phosphoribosylamine-glycine ligase activity"/>
    <property type="evidence" value="ECO:0007669"/>
    <property type="project" value="TreeGrafter"/>
</dbReference>
<dbReference type="GO" id="GO:0004641">
    <property type="term" value="F:phosphoribosylformylglycinamidine cyclo-ligase activity"/>
    <property type="evidence" value="ECO:0007669"/>
    <property type="project" value="UniProtKB-UniRule"/>
</dbReference>
<dbReference type="GO" id="GO:0006189">
    <property type="term" value="P:'de novo' IMP biosynthetic process"/>
    <property type="evidence" value="ECO:0007669"/>
    <property type="project" value="UniProtKB-UniRule"/>
</dbReference>
<dbReference type="GO" id="GO:0046084">
    <property type="term" value="P:adenine biosynthetic process"/>
    <property type="evidence" value="ECO:0007669"/>
    <property type="project" value="TreeGrafter"/>
</dbReference>
<dbReference type="CDD" id="cd02196">
    <property type="entry name" value="PurM"/>
    <property type="match status" value="1"/>
</dbReference>
<dbReference type="FunFam" id="3.30.1330.10:FF:000001">
    <property type="entry name" value="Phosphoribosylformylglycinamidine cyclo-ligase"/>
    <property type="match status" value="1"/>
</dbReference>
<dbReference type="FunFam" id="3.90.650.10:FF:000019">
    <property type="entry name" value="Trifunctional purine biosynthetic protein adenosine-3"/>
    <property type="match status" value="1"/>
</dbReference>
<dbReference type="Gene3D" id="3.90.650.10">
    <property type="entry name" value="PurM-like C-terminal domain"/>
    <property type="match status" value="1"/>
</dbReference>
<dbReference type="Gene3D" id="3.30.1330.10">
    <property type="entry name" value="PurM-like, N-terminal domain"/>
    <property type="match status" value="1"/>
</dbReference>
<dbReference type="HAMAP" id="MF_00741">
    <property type="entry name" value="AIRS"/>
    <property type="match status" value="1"/>
</dbReference>
<dbReference type="InterPro" id="IPR010918">
    <property type="entry name" value="PurM-like_C_dom"/>
</dbReference>
<dbReference type="InterPro" id="IPR036676">
    <property type="entry name" value="PurM-like_C_sf"/>
</dbReference>
<dbReference type="InterPro" id="IPR016188">
    <property type="entry name" value="PurM-like_N"/>
</dbReference>
<dbReference type="InterPro" id="IPR036921">
    <property type="entry name" value="PurM-like_N_sf"/>
</dbReference>
<dbReference type="InterPro" id="IPR004733">
    <property type="entry name" value="PurM_cligase"/>
</dbReference>
<dbReference type="NCBIfam" id="TIGR00878">
    <property type="entry name" value="purM"/>
    <property type="match status" value="1"/>
</dbReference>
<dbReference type="PANTHER" id="PTHR10520:SF12">
    <property type="entry name" value="TRIFUNCTIONAL PURINE BIOSYNTHETIC PROTEIN ADENOSINE-3"/>
    <property type="match status" value="1"/>
</dbReference>
<dbReference type="PANTHER" id="PTHR10520">
    <property type="entry name" value="TRIFUNCTIONAL PURINE BIOSYNTHETIC PROTEIN ADENOSINE-3-RELATED"/>
    <property type="match status" value="1"/>
</dbReference>
<dbReference type="Pfam" id="PF00586">
    <property type="entry name" value="AIRS"/>
    <property type="match status" value="1"/>
</dbReference>
<dbReference type="Pfam" id="PF02769">
    <property type="entry name" value="AIRS_C"/>
    <property type="match status" value="1"/>
</dbReference>
<dbReference type="SUPFAM" id="SSF56042">
    <property type="entry name" value="PurM C-terminal domain-like"/>
    <property type="match status" value="1"/>
</dbReference>
<dbReference type="SUPFAM" id="SSF55326">
    <property type="entry name" value="PurM N-terminal domain-like"/>
    <property type="match status" value="1"/>
</dbReference>
<organism>
    <name type="scientific">Rhizobium rhizogenes (strain K84 / ATCC BAA-868)</name>
    <name type="common">Agrobacterium radiobacter</name>
    <dbReference type="NCBI Taxonomy" id="311403"/>
    <lineage>
        <taxon>Bacteria</taxon>
        <taxon>Pseudomonadati</taxon>
        <taxon>Pseudomonadota</taxon>
        <taxon>Alphaproteobacteria</taxon>
        <taxon>Hyphomicrobiales</taxon>
        <taxon>Rhizobiaceae</taxon>
        <taxon>Rhizobium/Agrobacterium group</taxon>
        <taxon>Rhizobium</taxon>
    </lineage>
</organism>
<reference key="1">
    <citation type="journal article" date="2009" name="J. Bacteriol.">
        <title>Genome sequences of three Agrobacterium biovars help elucidate the evolution of multichromosome genomes in bacteria.</title>
        <authorList>
            <person name="Slater S.C."/>
            <person name="Goldman B.S."/>
            <person name="Goodner B."/>
            <person name="Setubal J.C."/>
            <person name="Farrand S.K."/>
            <person name="Nester E.W."/>
            <person name="Burr T.J."/>
            <person name="Banta L."/>
            <person name="Dickerman A.W."/>
            <person name="Paulsen I."/>
            <person name="Otten L."/>
            <person name="Suen G."/>
            <person name="Welch R."/>
            <person name="Almeida N.F."/>
            <person name="Arnold F."/>
            <person name="Burton O.T."/>
            <person name="Du Z."/>
            <person name="Ewing A."/>
            <person name="Godsy E."/>
            <person name="Heisel S."/>
            <person name="Houmiel K.L."/>
            <person name="Jhaveri J."/>
            <person name="Lu J."/>
            <person name="Miller N.M."/>
            <person name="Norton S."/>
            <person name="Chen Q."/>
            <person name="Phoolcharoen W."/>
            <person name="Ohlin V."/>
            <person name="Ondrusek D."/>
            <person name="Pride N."/>
            <person name="Stricklin S.L."/>
            <person name="Sun J."/>
            <person name="Wheeler C."/>
            <person name="Wilson L."/>
            <person name="Zhu H."/>
            <person name="Wood D.W."/>
        </authorList>
    </citation>
    <scope>NUCLEOTIDE SEQUENCE [LARGE SCALE GENOMIC DNA]</scope>
    <source>
        <strain>K84 / ATCC BAA-868</strain>
    </source>
</reference>
<feature type="chain" id="PRO_1000148260" description="Phosphoribosylformylglycinamidine cyclo-ligase">
    <location>
        <begin position="1"/>
        <end position="357"/>
    </location>
</feature>
<sequence length="357" mass="36733">MSQSGKNGLTYSDAGVDIDAGNLLVEKIKPAVRSTRRPGADGEIGGFGGLFDLKAAGFTDPVLVAANDGVGTKLKIAIDADYHDTVGIDLVAMCVNDLVVQGAEPLFFLDYFATGKLDPDQGAAIVGGIAAGCREAGCALIGGETAEMPGMYSDGDYDLAGFAVGAAERGQLLPSGDIAEGDVILGLASSGVHSNGFSLVRKIVDLSGLAWDAPAPFAEGKALGEALLTPTRIYVKPLLKAIRETHAIKALAHITGGGFPENIPRVLPKHLAAEIDLTAVKVPPVFSWLAKTGGVEAKEMLRTFNCGIGMIAVVAAENVDTVKAALEAEGESIVTLGRMIARDEGAAGTVYKGTLDL</sequence>
<protein>
    <recommendedName>
        <fullName evidence="1">Phosphoribosylformylglycinamidine cyclo-ligase</fullName>
        <ecNumber evidence="1">6.3.3.1</ecNumber>
    </recommendedName>
    <alternativeName>
        <fullName evidence="1">AIR synthase</fullName>
    </alternativeName>
    <alternativeName>
        <fullName evidence="1">AIRS</fullName>
    </alternativeName>
    <alternativeName>
        <fullName evidence="1">Phosphoribosyl-aminoimidazole synthetase</fullName>
    </alternativeName>
</protein>